<name>MIAB_NOSS1</name>
<sequence>MTTSNRRYHITTFGCQMNKADSERMAGILEDMGFKFSEDPNNADLILYNTCTIRDNAEQKVYSYLGRQAKRKHEQPDLTLVVAGCVAQQEGEALLRRVPELDLVMGPQHANRLKDLLESVFAGNQVVATEAVHIMEDITQARRDSTVTAWVNVIYGCNERCTYCVVPNVRGVEQSRTPAAVRAEMEELGRQGYKEITLLGQNIDAYGRDLPGATPEGRHLHTFTDLLYYVHDVPGVERIRFATSHPRYFTERLIKACAELPKVCEHFHIPFQSGDNQLLKAMARGYTQEKYRRIIDTIRRYMPDASISADAIVGFPGETEEQFENTLKLVDDIGFDQLNTAAYSPRPGTPAALWENQLSEEVKSDRLQRLNHLVNVKAAERSQRYMGRIEEVLVEEQNPKDQTQVMGRTGGNRLTFFKGDIHELKGQLVMVKINEVRAFSLTGEPIEMRQALPI</sequence>
<organism>
    <name type="scientific">Nostoc sp. (strain PCC 7120 / SAG 25.82 / UTEX 2576)</name>
    <dbReference type="NCBI Taxonomy" id="103690"/>
    <lineage>
        <taxon>Bacteria</taxon>
        <taxon>Bacillati</taxon>
        <taxon>Cyanobacteriota</taxon>
        <taxon>Cyanophyceae</taxon>
        <taxon>Nostocales</taxon>
        <taxon>Nostocaceae</taxon>
        <taxon>Nostoc</taxon>
    </lineage>
</organism>
<gene>
    <name evidence="1" type="primary">miaB</name>
    <name type="ordered locus">alr1312</name>
</gene>
<proteinExistence type="inferred from homology"/>
<keyword id="KW-0004">4Fe-4S</keyword>
<keyword id="KW-0963">Cytoplasm</keyword>
<keyword id="KW-0408">Iron</keyword>
<keyword id="KW-0411">Iron-sulfur</keyword>
<keyword id="KW-0479">Metal-binding</keyword>
<keyword id="KW-1185">Reference proteome</keyword>
<keyword id="KW-0949">S-adenosyl-L-methionine</keyword>
<keyword id="KW-0808">Transferase</keyword>
<keyword id="KW-0819">tRNA processing</keyword>
<feature type="chain" id="PRO_0000374108" description="tRNA-2-methylthio-N(6)-dimethylallyladenosine synthase">
    <location>
        <begin position="1"/>
        <end position="454"/>
    </location>
</feature>
<feature type="domain" description="MTTase N-terminal" evidence="1">
    <location>
        <begin position="6"/>
        <end position="122"/>
    </location>
</feature>
<feature type="domain" description="Radical SAM core" evidence="2">
    <location>
        <begin position="143"/>
        <end position="380"/>
    </location>
</feature>
<feature type="domain" description="TRAM" evidence="1">
    <location>
        <begin position="383"/>
        <end position="447"/>
    </location>
</feature>
<feature type="binding site" evidence="1">
    <location>
        <position position="15"/>
    </location>
    <ligand>
        <name>[4Fe-4S] cluster</name>
        <dbReference type="ChEBI" id="CHEBI:49883"/>
        <label>1</label>
    </ligand>
</feature>
<feature type="binding site" evidence="1">
    <location>
        <position position="51"/>
    </location>
    <ligand>
        <name>[4Fe-4S] cluster</name>
        <dbReference type="ChEBI" id="CHEBI:49883"/>
        <label>1</label>
    </ligand>
</feature>
<feature type="binding site" evidence="1">
    <location>
        <position position="85"/>
    </location>
    <ligand>
        <name>[4Fe-4S] cluster</name>
        <dbReference type="ChEBI" id="CHEBI:49883"/>
        <label>1</label>
    </ligand>
</feature>
<feature type="binding site" evidence="1">
    <location>
        <position position="157"/>
    </location>
    <ligand>
        <name>[4Fe-4S] cluster</name>
        <dbReference type="ChEBI" id="CHEBI:49883"/>
        <label>2</label>
        <note>4Fe-4S-S-AdoMet</note>
    </ligand>
</feature>
<feature type="binding site" evidence="1">
    <location>
        <position position="161"/>
    </location>
    <ligand>
        <name>[4Fe-4S] cluster</name>
        <dbReference type="ChEBI" id="CHEBI:49883"/>
        <label>2</label>
        <note>4Fe-4S-S-AdoMet</note>
    </ligand>
</feature>
<feature type="binding site" evidence="1">
    <location>
        <position position="164"/>
    </location>
    <ligand>
        <name>[4Fe-4S] cluster</name>
        <dbReference type="ChEBI" id="CHEBI:49883"/>
        <label>2</label>
        <note>4Fe-4S-S-AdoMet</note>
    </ligand>
</feature>
<dbReference type="EC" id="2.8.4.3" evidence="1"/>
<dbReference type="EMBL" id="BA000019">
    <property type="protein sequence ID" value="BAB73269.1"/>
    <property type="molecule type" value="Genomic_DNA"/>
</dbReference>
<dbReference type="PIR" id="AE1970">
    <property type="entry name" value="AE1970"/>
</dbReference>
<dbReference type="RefSeq" id="WP_010995484.1">
    <property type="nucleotide sequence ID" value="NZ_RSCN01000060.1"/>
</dbReference>
<dbReference type="SMR" id="Q8YXA3"/>
<dbReference type="STRING" id="103690.gene:10493326"/>
<dbReference type="KEGG" id="ana:alr1312"/>
<dbReference type="eggNOG" id="COG0621">
    <property type="taxonomic scope" value="Bacteria"/>
</dbReference>
<dbReference type="OrthoDB" id="9805215at2"/>
<dbReference type="Proteomes" id="UP000002483">
    <property type="component" value="Chromosome"/>
</dbReference>
<dbReference type="GO" id="GO:0005737">
    <property type="term" value="C:cytoplasm"/>
    <property type="evidence" value="ECO:0007669"/>
    <property type="project" value="UniProtKB-SubCell"/>
</dbReference>
<dbReference type="GO" id="GO:0051539">
    <property type="term" value="F:4 iron, 4 sulfur cluster binding"/>
    <property type="evidence" value="ECO:0007669"/>
    <property type="project" value="UniProtKB-UniRule"/>
</dbReference>
<dbReference type="GO" id="GO:0046872">
    <property type="term" value="F:metal ion binding"/>
    <property type="evidence" value="ECO:0007669"/>
    <property type="project" value="UniProtKB-KW"/>
</dbReference>
<dbReference type="GO" id="GO:0035596">
    <property type="term" value="F:methylthiotransferase activity"/>
    <property type="evidence" value="ECO:0007669"/>
    <property type="project" value="InterPro"/>
</dbReference>
<dbReference type="GO" id="GO:0035600">
    <property type="term" value="P:tRNA methylthiolation"/>
    <property type="evidence" value="ECO:0007669"/>
    <property type="project" value="TreeGrafter"/>
</dbReference>
<dbReference type="CDD" id="cd01335">
    <property type="entry name" value="Radical_SAM"/>
    <property type="match status" value="1"/>
</dbReference>
<dbReference type="FunFam" id="3.40.50.12160:FF:000006">
    <property type="entry name" value="tRNA-2-methylthio-N(6)-dimethylallyladenosine synthase"/>
    <property type="match status" value="1"/>
</dbReference>
<dbReference type="FunFam" id="3.80.30.20:FF:000001">
    <property type="entry name" value="tRNA-2-methylthio-N(6)-dimethylallyladenosine synthase 2"/>
    <property type="match status" value="1"/>
</dbReference>
<dbReference type="Gene3D" id="3.40.50.12160">
    <property type="entry name" value="Methylthiotransferase, N-terminal domain"/>
    <property type="match status" value="1"/>
</dbReference>
<dbReference type="Gene3D" id="3.80.30.20">
    <property type="entry name" value="tm_1862 like domain"/>
    <property type="match status" value="1"/>
</dbReference>
<dbReference type="HAMAP" id="MF_01864">
    <property type="entry name" value="tRNA_metthiotr_MiaB"/>
    <property type="match status" value="1"/>
</dbReference>
<dbReference type="InterPro" id="IPR006638">
    <property type="entry name" value="Elp3/MiaA/NifB-like_rSAM"/>
</dbReference>
<dbReference type="InterPro" id="IPR005839">
    <property type="entry name" value="Methylthiotransferase"/>
</dbReference>
<dbReference type="InterPro" id="IPR020612">
    <property type="entry name" value="Methylthiotransferase_CS"/>
</dbReference>
<dbReference type="InterPro" id="IPR013848">
    <property type="entry name" value="Methylthiotransferase_N"/>
</dbReference>
<dbReference type="InterPro" id="IPR038135">
    <property type="entry name" value="Methylthiotransferase_N_sf"/>
</dbReference>
<dbReference type="InterPro" id="IPR006463">
    <property type="entry name" value="MiaB_methiolase"/>
</dbReference>
<dbReference type="InterPro" id="IPR007197">
    <property type="entry name" value="rSAM"/>
</dbReference>
<dbReference type="InterPro" id="IPR023404">
    <property type="entry name" value="rSAM_horseshoe"/>
</dbReference>
<dbReference type="InterPro" id="IPR002792">
    <property type="entry name" value="TRAM_dom"/>
</dbReference>
<dbReference type="NCBIfam" id="TIGR01574">
    <property type="entry name" value="miaB-methiolase"/>
    <property type="match status" value="1"/>
</dbReference>
<dbReference type="NCBIfam" id="TIGR00089">
    <property type="entry name" value="MiaB/RimO family radical SAM methylthiotransferase"/>
    <property type="match status" value="1"/>
</dbReference>
<dbReference type="PANTHER" id="PTHR43020">
    <property type="entry name" value="CDK5 REGULATORY SUBUNIT-ASSOCIATED PROTEIN 1"/>
    <property type="match status" value="1"/>
</dbReference>
<dbReference type="PANTHER" id="PTHR43020:SF2">
    <property type="entry name" value="MITOCHONDRIAL TRNA METHYLTHIOTRANSFERASE CDK5RAP1"/>
    <property type="match status" value="1"/>
</dbReference>
<dbReference type="Pfam" id="PF04055">
    <property type="entry name" value="Radical_SAM"/>
    <property type="match status" value="1"/>
</dbReference>
<dbReference type="Pfam" id="PF01938">
    <property type="entry name" value="TRAM"/>
    <property type="match status" value="1"/>
</dbReference>
<dbReference type="Pfam" id="PF00919">
    <property type="entry name" value="UPF0004"/>
    <property type="match status" value="1"/>
</dbReference>
<dbReference type="SFLD" id="SFLDF00273">
    <property type="entry name" value="(dimethylallyl)adenosine_tRNA"/>
    <property type="match status" value="1"/>
</dbReference>
<dbReference type="SFLD" id="SFLDG01082">
    <property type="entry name" value="B12-binding_domain_containing"/>
    <property type="match status" value="1"/>
</dbReference>
<dbReference type="SFLD" id="SFLDS00029">
    <property type="entry name" value="Radical_SAM"/>
    <property type="match status" value="1"/>
</dbReference>
<dbReference type="SMART" id="SM00729">
    <property type="entry name" value="Elp3"/>
    <property type="match status" value="1"/>
</dbReference>
<dbReference type="SUPFAM" id="SSF102114">
    <property type="entry name" value="Radical SAM enzymes"/>
    <property type="match status" value="1"/>
</dbReference>
<dbReference type="PROSITE" id="PS51449">
    <property type="entry name" value="MTTASE_N"/>
    <property type="match status" value="1"/>
</dbReference>
<dbReference type="PROSITE" id="PS01278">
    <property type="entry name" value="MTTASE_RADICAL"/>
    <property type="match status" value="1"/>
</dbReference>
<dbReference type="PROSITE" id="PS51918">
    <property type="entry name" value="RADICAL_SAM"/>
    <property type="match status" value="1"/>
</dbReference>
<dbReference type="PROSITE" id="PS50926">
    <property type="entry name" value="TRAM"/>
    <property type="match status" value="1"/>
</dbReference>
<reference key="1">
    <citation type="journal article" date="2001" name="DNA Res.">
        <title>Complete genomic sequence of the filamentous nitrogen-fixing cyanobacterium Anabaena sp. strain PCC 7120.</title>
        <authorList>
            <person name="Kaneko T."/>
            <person name="Nakamura Y."/>
            <person name="Wolk C.P."/>
            <person name="Kuritz T."/>
            <person name="Sasamoto S."/>
            <person name="Watanabe A."/>
            <person name="Iriguchi M."/>
            <person name="Ishikawa A."/>
            <person name="Kawashima K."/>
            <person name="Kimura T."/>
            <person name="Kishida Y."/>
            <person name="Kohara M."/>
            <person name="Matsumoto M."/>
            <person name="Matsuno A."/>
            <person name="Muraki A."/>
            <person name="Nakazaki N."/>
            <person name="Shimpo S."/>
            <person name="Sugimoto M."/>
            <person name="Takazawa M."/>
            <person name="Yamada M."/>
            <person name="Yasuda M."/>
            <person name="Tabata S."/>
        </authorList>
    </citation>
    <scope>NUCLEOTIDE SEQUENCE [LARGE SCALE GENOMIC DNA]</scope>
    <source>
        <strain>PCC 7120 / SAG 25.82 / UTEX 2576</strain>
    </source>
</reference>
<evidence type="ECO:0000255" key="1">
    <source>
        <dbReference type="HAMAP-Rule" id="MF_01864"/>
    </source>
</evidence>
<evidence type="ECO:0000255" key="2">
    <source>
        <dbReference type="PROSITE-ProRule" id="PRU01266"/>
    </source>
</evidence>
<protein>
    <recommendedName>
        <fullName evidence="1">tRNA-2-methylthio-N(6)-dimethylallyladenosine synthase</fullName>
        <ecNumber evidence="1">2.8.4.3</ecNumber>
    </recommendedName>
    <alternativeName>
        <fullName evidence="1">(Dimethylallyl)adenosine tRNA methylthiotransferase MiaB</fullName>
    </alternativeName>
    <alternativeName>
        <fullName evidence="1">tRNA-i(6)A37 methylthiotransferase</fullName>
    </alternativeName>
</protein>
<accession>Q8YXA3</accession>
<comment type="function">
    <text evidence="1">Catalyzes the methylthiolation of N6-(dimethylallyl)adenosine (i(6)A), leading to the formation of 2-methylthio-N6-(dimethylallyl)adenosine (ms(2)i(6)A) at position 37 in tRNAs that read codons beginning with uridine.</text>
</comment>
<comment type="catalytic activity">
    <reaction evidence="1">
        <text>N(6)-dimethylallyladenosine(37) in tRNA + (sulfur carrier)-SH + AH2 + 2 S-adenosyl-L-methionine = 2-methylsulfanyl-N(6)-dimethylallyladenosine(37) in tRNA + (sulfur carrier)-H + 5'-deoxyadenosine + L-methionine + A + S-adenosyl-L-homocysteine + 2 H(+)</text>
        <dbReference type="Rhea" id="RHEA:37067"/>
        <dbReference type="Rhea" id="RHEA-COMP:10375"/>
        <dbReference type="Rhea" id="RHEA-COMP:10376"/>
        <dbReference type="Rhea" id="RHEA-COMP:14737"/>
        <dbReference type="Rhea" id="RHEA-COMP:14739"/>
        <dbReference type="ChEBI" id="CHEBI:13193"/>
        <dbReference type="ChEBI" id="CHEBI:15378"/>
        <dbReference type="ChEBI" id="CHEBI:17319"/>
        <dbReference type="ChEBI" id="CHEBI:17499"/>
        <dbReference type="ChEBI" id="CHEBI:29917"/>
        <dbReference type="ChEBI" id="CHEBI:57844"/>
        <dbReference type="ChEBI" id="CHEBI:57856"/>
        <dbReference type="ChEBI" id="CHEBI:59789"/>
        <dbReference type="ChEBI" id="CHEBI:64428"/>
        <dbReference type="ChEBI" id="CHEBI:74415"/>
        <dbReference type="ChEBI" id="CHEBI:74417"/>
        <dbReference type="EC" id="2.8.4.3"/>
    </reaction>
</comment>
<comment type="cofactor">
    <cofactor evidence="1">
        <name>[4Fe-4S] cluster</name>
        <dbReference type="ChEBI" id="CHEBI:49883"/>
    </cofactor>
    <text evidence="1">Binds 2 [4Fe-4S] clusters. One cluster is coordinated with 3 cysteines and an exchangeable S-adenosyl-L-methionine.</text>
</comment>
<comment type="subunit">
    <text evidence="1">Monomer.</text>
</comment>
<comment type="subcellular location">
    <subcellularLocation>
        <location evidence="1">Cytoplasm</location>
    </subcellularLocation>
</comment>
<comment type="similarity">
    <text evidence="1">Belongs to the methylthiotransferase family. MiaB subfamily.</text>
</comment>